<comment type="function">
    <text evidence="3">Transcription factor that regulates conidiation as well as kojic acid production, likely by negatively controlling kojR and kojA expression.</text>
</comment>
<comment type="subcellular location">
    <subcellularLocation>
        <location evidence="1">Nucleus</location>
    </subcellularLocation>
</comment>
<comment type="disruption phenotype">
    <text evidence="3">Leads to longer aerial hyphae and to decreased conidia production (PubMed:30790620). Decreases transcriptional levels of the central development pathway genes brlA, abaA, and wetA during conidiation (PubMed:30790620). Leads to increased expression of kojR and kojA and a subsequent 6-fold increase of kojic acid production (PubMed:30790620).</text>
</comment>
<gene>
    <name evidence="4" type="primary">kpeA</name>
    <name type="ORF">AO090003001186</name>
</gene>
<name>KPEA_ASPOR</name>
<organism>
    <name type="scientific">Aspergillus oryzae (strain ATCC 42149 / RIB 40)</name>
    <name type="common">Yellow koji mold</name>
    <dbReference type="NCBI Taxonomy" id="510516"/>
    <lineage>
        <taxon>Eukaryota</taxon>
        <taxon>Fungi</taxon>
        <taxon>Dikarya</taxon>
        <taxon>Ascomycota</taxon>
        <taxon>Pezizomycotina</taxon>
        <taxon>Eurotiomycetes</taxon>
        <taxon>Eurotiomycetidae</taxon>
        <taxon>Eurotiales</taxon>
        <taxon>Aspergillaceae</taxon>
        <taxon>Aspergillus</taxon>
        <taxon>Aspergillus subgen. Circumdati</taxon>
    </lineage>
</organism>
<reference key="1">
    <citation type="journal article" date="2005" name="Nature">
        <title>Genome sequencing and analysis of Aspergillus oryzae.</title>
        <authorList>
            <person name="Machida M."/>
            <person name="Asai K."/>
            <person name="Sano M."/>
            <person name="Tanaka T."/>
            <person name="Kumagai T."/>
            <person name="Terai G."/>
            <person name="Kusumoto K."/>
            <person name="Arima T."/>
            <person name="Akita O."/>
            <person name="Kashiwagi Y."/>
            <person name="Abe K."/>
            <person name="Gomi K."/>
            <person name="Horiuchi H."/>
            <person name="Kitamoto K."/>
            <person name="Kobayashi T."/>
            <person name="Takeuchi M."/>
            <person name="Denning D.W."/>
            <person name="Galagan J.E."/>
            <person name="Nierman W.C."/>
            <person name="Yu J."/>
            <person name="Archer D.B."/>
            <person name="Bennett J.W."/>
            <person name="Bhatnagar D."/>
            <person name="Cleveland T.E."/>
            <person name="Fedorova N.D."/>
            <person name="Gotoh O."/>
            <person name="Horikawa H."/>
            <person name="Hosoyama A."/>
            <person name="Ichinomiya M."/>
            <person name="Igarashi R."/>
            <person name="Iwashita K."/>
            <person name="Juvvadi P.R."/>
            <person name="Kato M."/>
            <person name="Kato Y."/>
            <person name="Kin T."/>
            <person name="Kokubun A."/>
            <person name="Maeda H."/>
            <person name="Maeyama N."/>
            <person name="Maruyama J."/>
            <person name="Nagasaki H."/>
            <person name="Nakajima T."/>
            <person name="Oda K."/>
            <person name="Okada K."/>
            <person name="Paulsen I."/>
            <person name="Sakamoto K."/>
            <person name="Sawano T."/>
            <person name="Takahashi M."/>
            <person name="Takase K."/>
            <person name="Terabayashi Y."/>
            <person name="Wortman J.R."/>
            <person name="Yamada O."/>
            <person name="Yamagata Y."/>
            <person name="Anazawa H."/>
            <person name="Hata Y."/>
            <person name="Koide Y."/>
            <person name="Komori T."/>
            <person name="Koyama Y."/>
            <person name="Minetoki T."/>
            <person name="Suharnan S."/>
            <person name="Tanaka A."/>
            <person name="Isono K."/>
            <person name="Kuhara S."/>
            <person name="Ogasawara N."/>
            <person name="Kikuchi H."/>
        </authorList>
    </citation>
    <scope>NUCLEOTIDE SEQUENCE [LARGE SCALE GENOMIC DNA]</scope>
    <source>
        <strain>ATCC 42149 / RIB 40</strain>
    </source>
</reference>
<reference key="2">
    <citation type="journal article" date="2019" name="Fungal Genet. Biol.">
        <title>A unique Zn(II)2-Cys6-type protein, KpeA, is involved in secondary metabolism and conidiation in Aspergillus oryzae.</title>
        <authorList>
            <person name="Arakawa G.Y."/>
            <person name="Kudo H."/>
            <person name="Yanase A."/>
            <person name="Eguchi Y."/>
            <person name="Kodama H."/>
            <person name="Ogawa M."/>
            <person name="Koyama Y."/>
            <person name="Shindo H."/>
            <person name="Hosaka M."/>
            <person name="Tokuoka M."/>
        </authorList>
    </citation>
    <scope>FUNCTION</scope>
    <scope>DISRUPTION PHENOTYPE</scope>
    <scope>DOMAIN</scope>
    <scope>MUTAGENESIS OF CYS-370; CYS-373; CYS-380; CYS-386; CYS-389 AND CYS-401</scope>
</reference>
<keyword id="KW-0238">DNA-binding</keyword>
<keyword id="KW-0479">Metal-binding</keyword>
<keyword id="KW-0539">Nucleus</keyword>
<keyword id="KW-1185">Reference proteome</keyword>
<keyword id="KW-0804">Transcription</keyword>
<keyword id="KW-0805">Transcription regulation</keyword>
<keyword id="KW-0862">Zinc</keyword>
<sequence length="762" mass="85508">MSNVDISNDGFIGLDYDSRNYLQPQSWPVAVDHQASHRAEGARDISPLQTSGHAFEQSVAQDPNLMVDWQFQHMQPHLQYSHEEASSAPQFTTASYGMPIHSSPIDLISGTPQGPLSGSLLDGPYLPLSAPVDMVPFPYQDLQSDLMAFPSDGLAHGLPEIPSYAAPQNVIDSSSPADTYLEVRSLTSSSSDNGWSTIEPRRSHEYFPDQGFFINPTQTLHDRSLSESSYSTSYGSFVEISNPVNSPSSDTNFDAAFNNTMTRRVSFDHTSHGSQSPTAVSPVAIVRPIPVPMKKPSSPTRSTGSSSSTSPPTRKPSRKSPIAAKTAETKVRKQSQNGKPETEKRVGKRKGPLKPDQRKQASEIRKLRACLRCKFLKKTCDKGEPCAGCQPSHARLWQVPCTRIDIKEIGYFMKDWKADYERHISLGFSVGNIKGFSEHERTLFITHGYGQILPINAREVYVHNDQCFNVDWVETYNRGPTKYEVETAKLSAGMEGISHAMLSDYLDRHIDGNGTFEKFVDDYFEGTPFLTQMLKTAFRFYYRTKMPVIRKALKLIVAYNLTLHITLVEGLGEEDGLLGKVDVEGSKFKGKTLAPVMINFQIKCAMANMWRELQKDVLEELSSLYSSVYSGEKLKNWPTIFILASILLAVWEEMQFDCHYRTRDPAAVEKFCNDMETTPVGVIVGLFQAISQKLPAFTEWETQKHHHLLHSNPDVCSAMTEVRQHVTQYESYLRSRSSSKFNPKDFDCLSNKFVSRLVVRAN</sequence>
<protein>
    <recommendedName>
        <fullName evidence="4">Transcription factor kpeA</fullName>
    </recommendedName>
    <alternativeName>
        <fullName evidence="4">Kojic acid production enhancement protein A</fullName>
    </alternativeName>
</protein>
<feature type="chain" id="PRO_0000456695" description="Transcription factor kpeA">
    <location>
        <begin position="1"/>
        <end position="762"/>
    </location>
</feature>
<feature type="DNA-binding region" description="Zn(2)-C6 fungal-type" evidence="1 3">
    <location>
        <begin position="370"/>
        <end position="401"/>
    </location>
</feature>
<feature type="region of interest" description="Disordered" evidence="2">
    <location>
        <begin position="267"/>
        <end position="361"/>
    </location>
</feature>
<feature type="compositionally biased region" description="Low complexity" evidence="2">
    <location>
        <begin position="294"/>
        <end position="312"/>
    </location>
</feature>
<feature type="mutagenesis site" description="Decreases conidia production and increases kojic acid production; when associated with A-373, A-380, A-386, A-389 and A-401." evidence="3">
    <original>C</original>
    <variation>A</variation>
    <location>
        <position position="370"/>
    </location>
</feature>
<feature type="mutagenesis site" description="Decreases conidia production and increases kojic acid production; when associated with A-370, A-380, A-386, A-389 and A-401." evidence="3">
    <original>C</original>
    <variation>A</variation>
    <location>
        <position position="373"/>
    </location>
</feature>
<feature type="mutagenesis site" description="Decreases conidia production and increases kojic acid production; when associated with A-370, A-373, A-386, A-389 and A-401." evidence="3">
    <original>C</original>
    <variation>A</variation>
    <location>
        <position position="380"/>
    </location>
</feature>
<feature type="mutagenesis site" description="Decreases conidia production and increases kojic acid production; when associated with A-370, A-373, A-380, A-389 and A-401." evidence="3">
    <original>C</original>
    <variation>A</variation>
    <location>
        <position position="386"/>
    </location>
</feature>
<feature type="mutagenesis site" description="Decreases conidia production and increases kojic acid production; when associated with A-370, A-373, A-380, A-386 and A-401." evidence="3">
    <original>C</original>
    <variation>A</variation>
    <location>
        <position position="389"/>
    </location>
</feature>
<feature type="mutagenesis site" description="Decreases conidia production and increases kojic acid production; when associated with A-370, A-373, A-380, A-386 and A-389." evidence="3">
    <original>C</original>
    <variation>A</variation>
    <location>
        <position position="401"/>
    </location>
</feature>
<proteinExistence type="evidence at protein level"/>
<evidence type="ECO:0000255" key="1">
    <source>
        <dbReference type="PROSITE-ProRule" id="PRU00227"/>
    </source>
</evidence>
<evidence type="ECO:0000256" key="2">
    <source>
        <dbReference type="SAM" id="MobiDB-lite"/>
    </source>
</evidence>
<evidence type="ECO:0000269" key="3">
    <source>
    </source>
</evidence>
<evidence type="ECO:0000303" key="4">
    <source>
    </source>
</evidence>
<dbReference type="EMBL" id="BA000050">
    <property type="protein sequence ID" value="BAE58271.1"/>
    <property type="molecule type" value="Genomic_DNA"/>
</dbReference>
<dbReference type="RefSeq" id="XP_001820273.1">
    <property type="nucleotide sequence ID" value="XM_001820221.1"/>
</dbReference>
<dbReference type="STRING" id="510516.Q2UJJ4"/>
<dbReference type="EnsemblFungi" id="BAE58271">
    <property type="protein sequence ID" value="BAE58271"/>
    <property type="gene ID" value="AO090003001186"/>
</dbReference>
<dbReference type="GeneID" id="5992256"/>
<dbReference type="KEGG" id="aor:AO090003001186"/>
<dbReference type="VEuPathDB" id="FungiDB:AO090003001186"/>
<dbReference type="HOGENOM" id="CLU_011237_1_0_1"/>
<dbReference type="OMA" id="DNGWSTI"/>
<dbReference type="OrthoDB" id="48637at5052"/>
<dbReference type="Proteomes" id="UP000006564">
    <property type="component" value="Chromosome 2"/>
</dbReference>
<dbReference type="GO" id="GO:0005634">
    <property type="term" value="C:nucleus"/>
    <property type="evidence" value="ECO:0007669"/>
    <property type="project" value="UniProtKB-SubCell"/>
</dbReference>
<dbReference type="GO" id="GO:0003677">
    <property type="term" value="F:DNA binding"/>
    <property type="evidence" value="ECO:0007669"/>
    <property type="project" value="UniProtKB-KW"/>
</dbReference>
<dbReference type="GO" id="GO:0000981">
    <property type="term" value="F:DNA-binding transcription factor activity, RNA polymerase II-specific"/>
    <property type="evidence" value="ECO:0007669"/>
    <property type="project" value="InterPro"/>
</dbReference>
<dbReference type="GO" id="GO:0008270">
    <property type="term" value="F:zinc ion binding"/>
    <property type="evidence" value="ECO:0007669"/>
    <property type="project" value="InterPro"/>
</dbReference>
<dbReference type="CDD" id="cd00067">
    <property type="entry name" value="GAL4"/>
    <property type="match status" value="1"/>
</dbReference>
<dbReference type="InterPro" id="IPR052973">
    <property type="entry name" value="Fungal_sec-metab_reg_TF"/>
</dbReference>
<dbReference type="InterPro" id="IPR001138">
    <property type="entry name" value="Zn2Cys6_DnaBD"/>
</dbReference>
<dbReference type="PANTHER" id="PTHR35392:SF1">
    <property type="entry name" value="ZN(II)2CYS6 TRANSCRIPTION FACTOR (EUROFUNG)"/>
    <property type="match status" value="1"/>
</dbReference>
<dbReference type="PANTHER" id="PTHR35392">
    <property type="entry name" value="ZN(II)2CYS6 TRANSCRIPTION FACTOR (EUROFUNG)-RELATED-RELATED"/>
    <property type="match status" value="1"/>
</dbReference>
<accession>Q2UJJ4</accession>